<sequence>MVAAKKTKKSTDNINNKLQLVMKSGKYTLGYKTVLRTLRNSKAKLVIISNNCPPLRKSEIEYYAMLAKVTVHHFHGNNVDLGTACGKYFRVCCLSIIDPGDSDIIKTTGEQ</sequence>
<feature type="chain" id="PRO_0000146133" description="Large ribosomal subunit protein eL30">
    <location>
        <begin position="1"/>
        <end position="111"/>
    </location>
</feature>
<dbReference type="EMBL" id="AP000836">
    <property type="protein sequence ID" value="BAA88178.1"/>
    <property type="molecule type" value="Genomic_DNA"/>
</dbReference>
<dbReference type="EMBL" id="AP008207">
    <property type="protein sequence ID" value="BAF04638.1"/>
    <property type="molecule type" value="Genomic_DNA"/>
</dbReference>
<dbReference type="EMBL" id="AP014957">
    <property type="protein sequence ID" value="BAS71546.1"/>
    <property type="molecule type" value="Genomic_DNA"/>
</dbReference>
<dbReference type="EMBL" id="CM000138">
    <property type="protein sequence ID" value="EEE54319.1"/>
    <property type="molecule type" value="Genomic_DNA"/>
</dbReference>
<dbReference type="EMBL" id="AK058917">
    <property type="protein sequence ID" value="BAG86842.1"/>
    <property type="molecule type" value="mRNA"/>
</dbReference>
<dbReference type="EMBL" id="AK119715">
    <property type="protein sequence ID" value="BAG99763.1"/>
    <property type="molecule type" value="mRNA"/>
</dbReference>
<dbReference type="EMBL" id="AK122128">
    <property type="protein sequence ID" value="BAH00807.1"/>
    <property type="molecule type" value="mRNA"/>
</dbReference>
<dbReference type="RefSeq" id="XP_015622112.1">
    <property type="nucleotide sequence ID" value="XM_015766626.1"/>
</dbReference>
<dbReference type="SMR" id="Q9SDG6"/>
<dbReference type="FunCoup" id="Q9SDG6">
    <property type="interactions" value="2557"/>
</dbReference>
<dbReference type="STRING" id="39947.Q9SDG6"/>
<dbReference type="PaxDb" id="39947-Q9SDG6"/>
<dbReference type="EnsemblPlants" id="Os01t0276000-01">
    <property type="protein sequence ID" value="Os01t0276000-01"/>
    <property type="gene ID" value="Os01g0276000"/>
</dbReference>
<dbReference type="Gramene" id="Os01t0276000-01">
    <property type="protein sequence ID" value="Os01t0276000-01"/>
    <property type="gene ID" value="Os01g0276000"/>
</dbReference>
<dbReference type="KEGG" id="dosa:Os01g0276000"/>
<dbReference type="eggNOG" id="KOG2988">
    <property type="taxonomic scope" value="Eukaryota"/>
</dbReference>
<dbReference type="HOGENOM" id="CLU_130502_0_1_1"/>
<dbReference type="InParanoid" id="Q9SDG6"/>
<dbReference type="OMA" id="HRVSCLS"/>
<dbReference type="OrthoDB" id="727327at2759"/>
<dbReference type="Proteomes" id="UP000000763">
    <property type="component" value="Chromosome 1"/>
</dbReference>
<dbReference type="Proteomes" id="UP000007752">
    <property type="component" value="Chromosome 1"/>
</dbReference>
<dbReference type="Proteomes" id="UP000059680">
    <property type="component" value="Chromosome 1"/>
</dbReference>
<dbReference type="GO" id="GO:0022625">
    <property type="term" value="C:cytosolic large ribosomal subunit"/>
    <property type="evidence" value="ECO:0000318"/>
    <property type="project" value="GO_Central"/>
</dbReference>
<dbReference type="GO" id="GO:0003723">
    <property type="term" value="F:RNA binding"/>
    <property type="evidence" value="ECO:0000318"/>
    <property type="project" value="GO_Central"/>
</dbReference>
<dbReference type="GO" id="GO:0003735">
    <property type="term" value="F:structural constituent of ribosome"/>
    <property type="evidence" value="ECO:0000318"/>
    <property type="project" value="GO_Central"/>
</dbReference>
<dbReference type="FunFam" id="3.30.1330.30:FF:000001">
    <property type="entry name" value="60S ribosomal protein L30"/>
    <property type="match status" value="1"/>
</dbReference>
<dbReference type="Gene3D" id="3.30.1330.30">
    <property type="match status" value="1"/>
</dbReference>
<dbReference type="HAMAP" id="MF_00481">
    <property type="entry name" value="Ribosomal_eL30"/>
    <property type="match status" value="1"/>
</dbReference>
<dbReference type="InterPro" id="IPR000231">
    <property type="entry name" value="Ribosomal_eL30"/>
</dbReference>
<dbReference type="InterPro" id="IPR039109">
    <property type="entry name" value="Ribosomal_eL30-like"/>
</dbReference>
<dbReference type="InterPro" id="IPR029064">
    <property type="entry name" value="Ribosomal_eL30-like_sf"/>
</dbReference>
<dbReference type="InterPro" id="IPR022991">
    <property type="entry name" value="Ribosomal_eL30_CS"/>
</dbReference>
<dbReference type="InterPro" id="IPR004038">
    <property type="entry name" value="Ribosomal_eL8/eL30/eS12/Gad45"/>
</dbReference>
<dbReference type="NCBIfam" id="NF002172">
    <property type="entry name" value="PRK01018.1"/>
    <property type="match status" value="1"/>
</dbReference>
<dbReference type="PANTHER" id="PTHR11449">
    <property type="entry name" value="RIBOSOMAL PROTEIN L30"/>
    <property type="match status" value="1"/>
</dbReference>
<dbReference type="Pfam" id="PF01248">
    <property type="entry name" value="Ribosomal_L7Ae"/>
    <property type="match status" value="1"/>
</dbReference>
<dbReference type="SUPFAM" id="SSF55315">
    <property type="entry name" value="L30e-like"/>
    <property type="match status" value="1"/>
</dbReference>
<dbReference type="PROSITE" id="PS00709">
    <property type="entry name" value="RIBOSOMAL_L30E_1"/>
    <property type="match status" value="1"/>
</dbReference>
<dbReference type="PROSITE" id="PS00993">
    <property type="entry name" value="RIBOSOMAL_L30E_2"/>
    <property type="match status" value="1"/>
</dbReference>
<keyword id="KW-1185">Reference proteome</keyword>
<keyword id="KW-0687">Ribonucleoprotein</keyword>
<keyword id="KW-0689">Ribosomal protein</keyword>
<accession>Q9SDG6</accession>
<accession>Q0JNP0</accession>
<evidence type="ECO:0000305" key="1"/>
<evidence type="ECO:0000312" key="2">
    <source>
        <dbReference type="EMBL" id="EEE54319.1"/>
    </source>
</evidence>
<reference key="1">
    <citation type="journal article" date="2002" name="Nature">
        <title>The genome sequence and structure of rice chromosome 1.</title>
        <authorList>
            <person name="Sasaki T."/>
            <person name="Matsumoto T."/>
            <person name="Yamamoto K."/>
            <person name="Sakata K."/>
            <person name="Baba T."/>
            <person name="Katayose Y."/>
            <person name="Wu J."/>
            <person name="Niimura Y."/>
            <person name="Cheng Z."/>
            <person name="Nagamura Y."/>
            <person name="Antonio B.A."/>
            <person name="Kanamori H."/>
            <person name="Hosokawa S."/>
            <person name="Masukawa M."/>
            <person name="Arikawa K."/>
            <person name="Chiden Y."/>
            <person name="Hayashi M."/>
            <person name="Okamoto M."/>
            <person name="Ando T."/>
            <person name="Aoki H."/>
            <person name="Arita K."/>
            <person name="Hamada M."/>
            <person name="Harada C."/>
            <person name="Hijishita S."/>
            <person name="Honda M."/>
            <person name="Ichikawa Y."/>
            <person name="Idonuma A."/>
            <person name="Iijima M."/>
            <person name="Ikeda M."/>
            <person name="Ikeno M."/>
            <person name="Ito S."/>
            <person name="Ito T."/>
            <person name="Ito Y."/>
            <person name="Ito Y."/>
            <person name="Iwabuchi A."/>
            <person name="Kamiya K."/>
            <person name="Karasawa W."/>
            <person name="Katagiri S."/>
            <person name="Kikuta A."/>
            <person name="Kobayashi N."/>
            <person name="Kono I."/>
            <person name="Machita K."/>
            <person name="Maehara T."/>
            <person name="Mizuno H."/>
            <person name="Mizubayashi T."/>
            <person name="Mukai Y."/>
            <person name="Nagasaki H."/>
            <person name="Nakashima M."/>
            <person name="Nakama Y."/>
            <person name="Nakamichi Y."/>
            <person name="Nakamura M."/>
            <person name="Namiki N."/>
            <person name="Negishi M."/>
            <person name="Ohta I."/>
            <person name="Ono N."/>
            <person name="Saji S."/>
            <person name="Sakai K."/>
            <person name="Shibata M."/>
            <person name="Shimokawa T."/>
            <person name="Shomura A."/>
            <person name="Song J."/>
            <person name="Takazaki Y."/>
            <person name="Terasawa K."/>
            <person name="Tsuji K."/>
            <person name="Waki K."/>
            <person name="Yamagata H."/>
            <person name="Yamane H."/>
            <person name="Yoshiki S."/>
            <person name="Yoshihara R."/>
            <person name="Yukawa K."/>
            <person name="Zhong H."/>
            <person name="Iwama H."/>
            <person name="Endo T."/>
            <person name="Ito H."/>
            <person name="Hahn J.H."/>
            <person name="Kim H.-I."/>
            <person name="Eun M.-Y."/>
            <person name="Yano M."/>
            <person name="Jiang J."/>
            <person name="Gojobori T."/>
        </authorList>
    </citation>
    <scope>NUCLEOTIDE SEQUENCE [LARGE SCALE GENOMIC DNA]</scope>
    <source>
        <strain>cv. Nipponbare</strain>
    </source>
</reference>
<reference key="2">
    <citation type="journal article" date="2005" name="Nature">
        <title>The map-based sequence of the rice genome.</title>
        <authorList>
            <consortium name="International rice genome sequencing project (IRGSP)"/>
        </authorList>
    </citation>
    <scope>NUCLEOTIDE SEQUENCE [LARGE SCALE GENOMIC DNA]</scope>
    <source>
        <strain>cv. Nipponbare</strain>
    </source>
</reference>
<reference key="3">
    <citation type="journal article" date="2008" name="Nucleic Acids Res.">
        <title>The rice annotation project database (RAP-DB): 2008 update.</title>
        <authorList>
            <consortium name="The rice annotation project (RAP)"/>
        </authorList>
    </citation>
    <scope>GENOME REANNOTATION</scope>
    <source>
        <strain>cv. Nipponbare</strain>
    </source>
</reference>
<reference key="4">
    <citation type="journal article" date="2013" name="Rice">
        <title>Improvement of the Oryza sativa Nipponbare reference genome using next generation sequence and optical map data.</title>
        <authorList>
            <person name="Kawahara Y."/>
            <person name="de la Bastide M."/>
            <person name="Hamilton J.P."/>
            <person name="Kanamori H."/>
            <person name="McCombie W.R."/>
            <person name="Ouyang S."/>
            <person name="Schwartz D.C."/>
            <person name="Tanaka T."/>
            <person name="Wu J."/>
            <person name="Zhou S."/>
            <person name="Childs K.L."/>
            <person name="Davidson R.M."/>
            <person name="Lin H."/>
            <person name="Quesada-Ocampo L."/>
            <person name="Vaillancourt B."/>
            <person name="Sakai H."/>
            <person name="Lee S.S."/>
            <person name="Kim J."/>
            <person name="Numa H."/>
            <person name="Itoh T."/>
            <person name="Buell C.R."/>
            <person name="Matsumoto T."/>
        </authorList>
    </citation>
    <scope>GENOME REANNOTATION</scope>
    <source>
        <strain>cv. Nipponbare</strain>
    </source>
</reference>
<reference key="5">
    <citation type="journal article" date="2005" name="PLoS Biol.">
        <title>The genomes of Oryza sativa: a history of duplications.</title>
        <authorList>
            <person name="Yu J."/>
            <person name="Wang J."/>
            <person name="Lin W."/>
            <person name="Li S."/>
            <person name="Li H."/>
            <person name="Zhou J."/>
            <person name="Ni P."/>
            <person name="Dong W."/>
            <person name="Hu S."/>
            <person name="Zeng C."/>
            <person name="Zhang J."/>
            <person name="Zhang Y."/>
            <person name="Li R."/>
            <person name="Xu Z."/>
            <person name="Li S."/>
            <person name="Li X."/>
            <person name="Zheng H."/>
            <person name="Cong L."/>
            <person name="Lin L."/>
            <person name="Yin J."/>
            <person name="Geng J."/>
            <person name="Li G."/>
            <person name="Shi J."/>
            <person name="Liu J."/>
            <person name="Lv H."/>
            <person name="Li J."/>
            <person name="Wang J."/>
            <person name="Deng Y."/>
            <person name="Ran L."/>
            <person name="Shi X."/>
            <person name="Wang X."/>
            <person name="Wu Q."/>
            <person name="Li C."/>
            <person name="Ren X."/>
            <person name="Wang J."/>
            <person name="Wang X."/>
            <person name="Li D."/>
            <person name="Liu D."/>
            <person name="Zhang X."/>
            <person name="Ji Z."/>
            <person name="Zhao W."/>
            <person name="Sun Y."/>
            <person name="Zhang Z."/>
            <person name="Bao J."/>
            <person name="Han Y."/>
            <person name="Dong L."/>
            <person name="Ji J."/>
            <person name="Chen P."/>
            <person name="Wu S."/>
            <person name="Liu J."/>
            <person name="Xiao Y."/>
            <person name="Bu D."/>
            <person name="Tan J."/>
            <person name="Yang L."/>
            <person name="Ye C."/>
            <person name="Zhang J."/>
            <person name="Xu J."/>
            <person name="Zhou Y."/>
            <person name="Yu Y."/>
            <person name="Zhang B."/>
            <person name="Zhuang S."/>
            <person name="Wei H."/>
            <person name="Liu B."/>
            <person name="Lei M."/>
            <person name="Yu H."/>
            <person name="Li Y."/>
            <person name="Xu H."/>
            <person name="Wei S."/>
            <person name="He X."/>
            <person name="Fang L."/>
            <person name="Zhang Z."/>
            <person name="Zhang Y."/>
            <person name="Huang X."/>
            <person name="Su Z."/>
            <person name="Tong W."/>
            <person name="Li J."/>
            <person name="Tong Z."/>
            <person name="Li S."/>
            <person name="Ye J."/>
            <person name="Wang L."/>
            <person name="Fang L."/>
            <person name="Lei T."/>
            <person name="Chen C.-S."/>
            <person name="Chen H.-C."/>
            <person name="Xu Z."/>
            <person name="Li H."/>
            <person name="Huang H."/>
            <person name="Zhang F."/>
            <person name="Xu H."/>
            <person name="Li N."/>
            <person name="Zhao C."/>
            <person name="Li S."/>
            <person name="Dong L."/>
            <person name="Huang Y."/>
            <person name="Li L."/>
            <person name="Xi Y."/>
            <person name="Qi Q."/>
            <person name="Li W."/>
            <person name="Zhang B."/>
            <person name="Hu W."/>
            <person name="Zhang Y."/>
            <person name="Tian X."/>
            <person name="Jiao Y."/>
            <person name="Liang X."/>
            <person name="Jin J."/>
            <person name="Gao L."/>
            <person name="Zheng W."/>
            <person name="Hao B."/>
            <person name="Liu S.-M."/>
            <person name="Wang W."/>
            <person name="Yuan L."/>
            <person name="Cao M."/>
            <person name="McDermott J."/>
            <person name="Samudrala R."/>
            <person name="Wang J."/>
            <person name="Wong G.K.-S."/>
            <person name="Yang H."/>
        </authorList>
    </citation>
    <scope>NUCLEOTIDE SEQUENCE [LARGE SCALE GENOMIC DNA]</scope>
    <source>
        <strain>cv. Nipponbare</strain>
    </source>
</reference>
<reference key="6">
    <citation type="journal article" date="2003" name="Science">
        <title>Collection, mapping, and annotation of over 28,000 cDNA clones from japonica rice.</title>
        <authorList>
            <consortium name="The rice full-length cDNA consortium"/>
        </authorList>
    </citation>
    <scope>NUCLEOTIDE SEQUENCE [LARGE SCALE MRNA]</scope>
    <source>
        <strain>cv. Nipponbare</strain>
    </source>
</reference>
<organism>
    <name type="scientific">Oryza sativa subsp. japonica</name>
    <name type="common">Rice</name>
    <dbReference type="NCBI Taxonomy" id="39947"/>
    <lineage>
        <taxon>Eukaryota</taxon>
        <taxon>Viridiplantae</taxon>
        <taxon>Streptophyta</taxon>
        <taxon>Embryophyta</taxon>
        <taxon>Tracheophyta</taxon>
        <taxon>Spermatophyta</taxon>
        <taxon>Magnoliopsida</taxon>
        <taxon>Liliopsida</taxon>
        <taxon>Poales</taxon>
        <taxon>Poaceae</taxon>
        <taxon>BOP clade</taxon>
        <taxon>Oryzoideae</taxon>
        <taxon>Oryzeae</taxon>
        <taxon>Oryzinae</taxon>
        <taxon>Oryza</taxon>
        <taxon>Oryza sativa</taxon>
    </lineage>
</organism>
<proteinExistence type="inferred from homology"/>
<protein>
    <recommendedName>
        <fullName evidence="1">Large ribosomal subunit protein eL30</fullName>
    </recommendedName>
    <alternativeName>
        <fullName>60S ribosomal protein L30</fullName>
    </alternativeName>
</protein>
<name>RL30_ORYSJ</name>
<gene>
    <name type="primary">RPL30</name>
    <name type="ordered locus">Os01g0276000</name>
    <name type="ordered locus">LOC_Os01g16890</name>
    <name evidence="2" type="ORF">OsJ_01280</name>
    <name type="ORF">P0038F12.17</name>
</gene>
<comment type="similarity">
    <text evidence="1">Belongs to the eukaryotic ribosomal protein eL30 family.</text>
</comment>